<feature type="chain" id="PRO_0000132366" description="Small ribosomal subunit protein uS4">
    <location>
        <begin position="1"/>
        <end position="206"/>
    </location>
</feature>
<feature type="domain" description="S4 RNA-binding" evidence="1">
    <location>
        <begin position="96"/>
        <end position="159"/>
    </location>
</feature>
<name>RS4_CHRVO</name>
<proteinExistence type="inferred from homology"/>
<gene>
    <name evidence="1" type="primary">rpsD</name>
    <name type="ordered locus">CV_4161</name>
</gene>
<keyword id="KW-1185">Reference proteome</keyword>
<keyword id="KW-0687">Ribonucleoprotein</keyword>
<keyword id="KW-0689">Ribosomal protein</keyword>
<keyword id="KW-0694">RNA-binding</keyword>
<keyword id="KW-0699">rRNA-binding</keyword>
<organism>
    <name type="scientific">Chromobacterium violaceum (strain ATCC 12472 / DSM 30191 / JCM 1249 / CCUG 213 / NBRC 12614 / NCIMB 9131 / NCTC 9757 / MK)</name>
    <dbReference type="NCBI Taxonomy" id="243365"/>
    <lineage>
        <taxon>Bacteria</taxon>
        <taxon>Pseudomonadati</taxon>
        <taxon>Pseudomonadota</taxon>
        <taxon>Betaproteobacteria</taxon>
        <taxon>Neisseriales</taxon>
        <taxon>Chromobacteriaceae</taxon>
        <taxon>Chromobacterium</taxon>
    </lineage>
</organism>
<comment type="function">
    <text evidence="1">One of the primary rRNA binding proteins, it binds directly to 16S rRNA where it nucleates assembly of the body of the 30S subunit.</text>
</comment>
<comment type="function">
    <text evidence="1">With S5 and S12 plays an important role in translational accuracy.</text>
</comment>
<comment type="subunit">
    <text evidence="1">Part of the 30S ribosomal subunit. Contacts protein S5. The interaction surface between S4 and S5 is involved in control of translational fidelity.</text>
</comment>
<comment type="similarity">
    <text evidence="1">Belongs to the universal ribosomal protein uS4 family.</text>
</comment>
<dbReference type="EMBL" id="AE016825">
    <property type="protein sequence ID" value="AAQ61822.1"/>
    <property type="molecule type" value="Genomic_DNA"/>
</dbReference>
<dbReference type="RefSeq" id="WP_011137708.1">
    <property type="nucleotide sequence ID" value="NC_005085.1"/>
</dbReference>
<dbReference type="SMR" id="Q7NQH6"/>
<dbReference type="STRING" id="243365.CV_4161"/>
<dbReference type="GeneID" id="66366367"/>
<dbReference type="KEGG" id="cvi:CV_4161"/>
<dbReference type="eggNOG" id="COG0522">
    <property type="taxonomic scope" value="Bacteria"/>
</dbReference>
<dbReference type="HOGENOM" id="CLU_092403_0_2_4"/>
<dbReference type="OrthoDB" id="9803672at2"/>
<dbReference type="Proteomes" id="UP000001424">
    <property type="component" value="Chromosome"/>
</dbReference>
<dbReference type="GO" id="GO:0015935">
    <property type="term" value="C:small ribosomal subunit"/>
    <property type="evidence" value="ECO:0007669"/>
    <property type="project" value="InterPro"/>
</dbReference>
<dbReference type="GO" id="GO:0019843">
    <property type="term" value="F:rRNA binding"/>
    <property type="evidence" value="ECO:0007669"/>
    <property type="project" value="UniProtKB-UniRule"/>
</dbReference>
<dbReference type="GO" id="GO:0003735">
    <property type="term" value="F:structural constituent of ribosome"/>
    <property type="evidence" value="ECO:0007669"/>
    <property type="project" value="InterPro"/>
</dbReference>
<dbReference type="GO" id="GO:0042274">
    <property type="term" value="P:ribosomal small subunit biogenesis"/>
    <property type="evidence" value="ECO:0007669"/>
    <property type="project" value="TreeGrafter"/>
</dbReference>
<dbReference type="GO" id="GO:0006412">
    <property type="term" value="P:translation"/>
    <property type="evidence" value="ECO:0007669"/>
    <property type="project" value="UniProtKB-UniRule"/>
</dbReference>
<dbReference type="CDD" id="cd00165">
    <property type="entry name" value="S4"/>
    <property type="match status" value="1"/>
</dbReference>
<dbReference type="FunFam" id="1.10.1050.10:FF:000001">
    <property type="entry name" value="30S ribosomal protein S4"/>
    <property type="match status" value="1"/>
</dbReference>
<dbReference type="FunFam" id="3.10.290.10:FF:000001">
    <property type="entry name" value="30S ribosomal protein S4"/>
    <property type="match status" value="1"/>
</dbReference>
<dbReference type="Gene3D" id="1.10.1050.10">
    <property type="entry name" value="Ribosomal Protein S4 Delta 41, Chain A, domain 1"/>
    <property type="match status" value="1"/>
</dbReference>
<dbReference type="Gene3D" id="3.10.290.10">
    <property type="entry name" value="RNA-binding S4 domain"/>
    <property type="match status" value="1"/>
</dbReference>
<dbReference type="HAMAP" id="MF_01306_B">
    <property type="entry name" value="Ribosomal_uS4_B"/>
    <property type="match status" value="1"/>
</dbReference>
<dbReference type="InterPro" id="IPR022801">
    <property type="entry name" value="Ribosomal_uS4"/>
</dbReference>
<dbReference type="InterPro" id="IPR005709">
    <property type="entry name" value="Ribosomal_uS4_bac-type"/>
</dbReference>
<dbReference type="InterPro" id="IPR018079">
    <property type="entry name" value="Ribosomal_uS4_CS"/>
</dbReference>
<dbReference type="InterPro" id="IPR001912">
    <property type="entry name" value="Ribosomal_uS4_N"/>
</dbReference>
<dbReference type="InterPro" id="IPR002942">
    <property type="entry name" value="S4_RNA-bd"/>
</dbReference>
<dbReference type="InterPro" id="IPR036986">
    <property type="entry name" value="S4_RNA-bd_sf"/>
</dbReference>
<dbReference type="NCBIfam" id="NF003717">
    <property type="entry name" value="PRK05327.1"/>
    <property type="match status" value="1"/>
</dbReference>
<dbReference type="NCBIfam" id="TIGR01017">
    <property type="entry name" value="rpsD_bact"/>
    <property type="match status" value="1"/>
</dbReference>
<dbReference type="PANTHER" id="PTHR11831">
    <property type="entry name" value="30S 40S RIBOSOMAL PROTEIN"/>
    <property type="match status" value="1"/>
</dbReference>
<dbReference type="PANTHER" id="PTHR11831:SF4">
    <property type="entry name" value="SMALL RIBOSOMAL SUBUNIT PROTEIN US4M"/>
    <property type="match status" value="1"/>
</dbReference>
<dbReference type="Pfam" id="PF00163">
    <property type="entry name" value="Ribosomal_S4"/>
    <property type="match status" value="1"/>
</dbReference>
<dbReference type="Pfam" id="PF01479">
    <property type="entry name" value="S4"/>
    <property type="match status" value="1"/>
</dbReference>
<dbReference type="SMART" id="SM01390">
    <property type="entry name" value="Ribosomal_S4"/>
    <property type="match status" value="1"/>
</dbReference>
<dbReference type="SMART" id="SM00363">
    <property type="entry name" value="S4"/>
    <property type="match status" value="1"/>
</dbReference>
<dbReference type="SUPFAM" id="SSF55174">
    <property type="entry name" value="Alpha-L RNA-binding motif"/>
    <property type="match status" value="1"/>
</dbReference>
<dbReference type="PROSITE" id="PS00632">
    <property type="entry name" value="RIBOSOMAL_S4"/>
    <property type="match status" value="1"/>
</dbReference>
<dbReference type="PROSITE" id="PS50889">
    <property type="entry name" value="S4"/>
    <property type="match status" value="1"/>
</dbReference>
<reference key="1">
    <citation type="journal article" date="2003" name="Proc. Natl. Acad. Sci. U.S.A.">
        <title>The complete genome sequence of Chromobacterium violaceum reveals remarkable and exploitable bacterial adaptability.</title>
        <authorList>
            <person name="Vasconcelos A.T.R."/>
            <person name="de Almeida D.F."/>
            <person name="Hungria M."/>
            <person name="Guimaraes C.T."/>
            <person name="Antonio R.V."/>
            <person name="Almeida F.C."/>
            <person name="de Almeida L.G.P."/>
            <person name="de Almeida R."/>
            <person name="Alves-Gomes J.A."/>
            <person name="Andrade E.M."/>
            <person name="Araripe J."/>
            <person name="de Araujo M.F.F."/>
            <person name="Astolfi-Filho S."/>
            <person name="Azevedo V."/>
            <person name="Baptista A.J."/>
            <person name="Bataus L.A.M."/>
            <person name="Batista J.S."/>
            <person name="Belo A."/>
            <person name="van den Berg C."/>
            <person name="Bogo M."/>
            <person name="Bonatto S."/>
            <person name="Bordignon J."/>
            <person name="Brigido M.M."/>
            <person name="Brito C.A."/>
            <person name="Brocchi M."/>
            <person name="Burity H.A."/>
            <person name="Camargo A.A."/>
            <person name="Cardoso D.D.P."/>
            <person name="Carneiro N.P."/>
            <person name="Carraro D.M."/>
            <person name="Carvalho C.M.B."/>
            <person name="Cascardo J.C.M."/>
            <person name="Cavada B.S."/>
            <person name="Chueire L.M.O."/>
            <person name="Creczynski-Pasa T.B."/>
            <person name="Cunha-Junior N.C."/>
            <person name="Fagundes N."/>
            <person name="Falcao C.L."/>
            <person name="Fantinatti F."/>
            <person name="Farias I.P."/>
            <person name="Felipe M.S.S."/>
            <person name="Ferrari L.P."/>
            <person name="Ferro J.A."/>
            <person name="Ferro M.I.T."/>
            <person name="Franco G.R."/>
            <person name="Freitas N.S.A."/>
            <person name="Furlan L.R."/>
            <person name="Gazzinelli R.T."/>
            <person name="Gomes E.A."/>
            <person name="Goncalves P.R."/>
            <person name="Grangeiro T.B."/>
            <person name="Grattapaglia D."/>
            <person name="Grisard E.C."/>
            <person name="Hanna E.S."/>
            <person name="Jardim S.N."/>
            <person name="Laurino J."/>
            <person name="Leoi L.C.T."/>
            <person name="Lima L.F.A."/>
            <person name="Loureiro M.F."/>
            <person name="Lyra M.C.C.P."/>
            <person name="Madeira H.M.F."/>
            <person name="Manfio G.P."/>
            <person name="Maranhao A.Q."/>
            <person name="Martins W.S."/>
            <person name="di Mauro S.M.Z."/>
            <person name="de Medeiros S.R.B."/>
            <person name="Meissner R.V."/>
            <person name="Moreira M.A.M."/>
            <person name="Nascimento F.F."/>
            <person name="Nicolas M.F."/>
            <person name="Oliveira J.G."/>
            <person name="Oliveira S.C."/>
            <person name="Paixao R.F.C."/>
            <person name="Parente J.A."/>
            <person name="Pedrosa F.O."/>
            <person name="Pena S.D.J."/>
            <person name="Pereira J.O."/>
            <person name="Pereira M."/>
            <person name="Pinto L.S.R.C."/>
            <person name="Pinto L.S."/>
            <person name="Porto J.I.R."/>
            <person name="Potrich D.P."/>
            <person name="Ramalho-Neto C.E."/>
            <person name="Reis A.M.M."/>
            <person name="Rigo L.U."/>
            <person name="Rondinelli E."/>
            <person name="Santos E.B.P."/>
            <person name="Santos F.R."/>
            <person name="Schneider M.P.C."/>
            <person name="Seuanez H.N."/>
            <person name="Silva A.M.R."/>
            <person name="da Silva A.L.C."/>
            <person name="Silva D.W."/>
            <person name="Silva R."/>
            <person name="Simoes I.C."/>
            <person name="Simon D."/>
            <person name="Soares C.M.A."/>
            <person name="Soares R.B.A."/>
            <person name="Souza E.M."/>
            <person name="Souza K.R.L."/>
            <person name="Souza R.C."/>
            <person name="Steffens M.B.R."/>
            <person name="Steindel M."/>
            <person name="Teixeira S.R."/>
            <person name="Urmenyi T."/>
            <person name="Vettore A."/>
            <person name="Wassem R."/>
            <person name="Zaha A."/>
            <person name="Simpson A.J.G."/>
        </authorList>
    </citation>
    <scope>NUCLEOTIDE SEQUENCE [LARGE SCALE GENOMIC DNA]</scope>
    <source>
        <strain>ATCC 12472 / DSM 30191 / JCM 1249 / CCUG 213 / NBRC 12614 / NCIMB 9131 / NCTC 9757 / MK</strain>
    </source>
</reference>
<sequence>MARYIGPKCKLARREGTDLFLKSARRALDSKCKLDAAPGQHGARRGRLSDYGVQLREKQKIRRIYGVLERQFRNYFAEAVRRKGSTGENLLKLLESRLDNVVYRMGFGSTRAEARQLVSHKAIVVNGQVVNIPSYQVKAGDVVSVREKAKKQARIVEGLALAEQGGFPSWVSVDSKKMEGTFKSAPERSELSSDINEQLVVEFYSK</sequence>
<accession>Q7NQH6</accession>
<protein>
    <recommendedName>
        <fullName evidence="1">Small ribosomal subunit protein uS4</fullName>
    </recommendedName>
    <alternativeName>
        <fullName evidence="2">30S ribosomal protein S4</fullName>
    </alternativeName>
</protein>
<evidence type="ECO:0000255" key="1">
    <source>
        <dbReference type="HAMAP-Rule" id="MF_01306"/>
    </source>
</evidence>
<evidence type="ECO:0000305" key="2"/>